<gene>
    <name evidence="1" type="primary">rpsD</name>
    <name type="ordered locus">Achl_2018</name>
</gene>
<reference key="1">
    <citation type="submission" date="2009-01" db="EMBL/GenBank/DDBJ databases">
        <title>Complete sequence of chromosome of Arthrobacter chlorophenolicus A6.</title>
        <authorList>
            <consortium name="US DOE Joint Genome Institute"/>
            <person name="Lucas S."/>
            <person name="Copeland A."/>
            <person name="Lapidus A."/>
            <person name="Glavina del Rio T."/>
            <person name="Tice H."/>
            <person name="Bruce D."/>
            <person name="Goodwin L."/>
            <person name="Pitluck S."/>
            <person name="Goltsman E."/>
            <person name="Clum A."/>
            <person name="Larimer F."/>
            <person name="Land M."/>
            <person name="Hauser L."/>
            <person name="Kyrpides N."/>
            <person name="Mikhailova N."/>
            <person name="Jansson J."/>
            <person name="Richardson P."/>
        </authorList>
    </citation>
    <scope>NUCLEOTIDE SEQUENCE [LARGE SCALE GENOMIC DNA]</scope>
    <source>
        <strain>ATCC 700700 / DSM 12829 / CIP 107037 / JCM 12360 / KCTC 9906 / NCIMB 13794 / A6</strain>
    </source>
</reference>
<feature type="chain" id="PRO_1000165379" description="Small ribosomal subunit protein uS4">
    <location>
        <begin position="1"/>
        <end position="208"/>
    </location>
</feature>
<feature type="domain" description="S4 RNA-binding" evidence="1">
    <location>
        <begin position="95"/>
        <end position="161"/>
    </location>
</feature>
<proteinExistence type="inferred from homology"/>
<accession>B8H9C3</accession>
<dbReference type="EMBL" id="CP001341">
    <property type="protein sequence ID" value="ACL39992.1"/>
    <property type="molecule type" value="Genomic_DNA"/>
</dbReference>
<dbReference type="RefSeq" id="WP_015937210.1">
    <property type="nucleotide sequence ID" value="NC_011886.1"/>
</dbReference>
<dbReference type="SMR" id="B8H9C3"/>
<dbReference type="STRING" id="452863.Achl_2018"/>
<dbReference type="KEGG" id="ach:Achl_2018"/>
<dbReference type="eggNOG" id="COG0522">
    <property type="taxonomic scope" value="Bacteria"/>
</dbReference>
<dbReference type="HOGENOM" id="CLU_092403_0_3_11"/>
<dbReference type="OrthoDB" id="9803672at2"/>
<dbReference type="Proteomes" id="UP000002505">
    <property type="component" value="Chromosome"/>
</dbReference>
<dbReference type="GO" id="GO:0015935">
    <property type="term" value="C:small ribosomal subunit"/>
    <property type="evidence" value="ECO:0007669"/>
    <property type="project" value="InterPro"/>
</dbReference>
<dbReference type="GO" id="GO:0019843">
    <property type="term" value="F:rRNA binding"/>
    <property type="evidence" value="ECO:0007669"/>
    <property type="project" value="UniProtKB-UniRule"/>
</dbReference>
<dbReference type="GO" id="GO:0003735">
    <property type="term" value="F:structural constituent of ribosome"/>
    <property type="evidence" value="ECO:0007669"/>
    <property type="project" value="InterPro"/>
</dbReference>
<dbReference type="GO" id="GO:0042274">
    <property type="term" value="P:ribosomal small subunit biogenesis"/>
    <property type="evidence" value="ECO:0007669"/>
    <property type="project" value="TreeGrafter"/>
</dbReference>
<dbReference type="GO" id="GO:0006412">
    <property type="term" value="P:translation"/>
    <property type="evidence" value="ECO:0007669"/>
    <property type="project" value="UniProtKB-UniRule"/>
</dbReference>
<dbReference type="CDD" id="cd00165">
    <property type="entry name" value="S4"/>
    <property type="match status" value="1"/>
</dbReference>
<dbReference type="FunFam" id="3.10.290.10:FF:000001">
    <property type="entry name" value="30S ribosomal protein S4"/>
    <property type="match status" value="1"/>
</dbReference>
<dbReference type="Gene3D" id="1.10.1050.10">
    <property type="entry name" value="Ribosomal Protein S4 Delta 41, Chain A, domain 1"/>
    <property type="match status" value="1"/>
</dbReference>
<dbReference type="Gene3D" id="3.10.290.10">
    <property type="entry name" value="RNA-binding S4 domain"/>
    <property type="match status" value="1"/>
</dbReference>
<dbReference type="HAMAP" id="MF_01306_B">
    <property type="entry name" value="Ribosomal_uS4_B"/>
    <property type="match status" value="1"/>
</dbReference>
<dbReference type="InterPro" id="IPR022801">
    <property type="entry name" value="Ribosomal_uS4"/>
</dbReference>
<dbReference type="InterPro" id="IPR005709">
    <property type="entry name" value="Ribosomal_uS4_bac-type"/>
</dbReference>
<dbReference type="InterPro" id="IPR018079">
    <property type="entry name" value="Ribosomal_uS4_CS"/>
</dbReference>
<dbReference type="InterPro" id="IPR001912">
    <property type="entry name" value="Ribosomal_uS4_N"/>
</dbReference>
<dbReference type="InterPro" id="IPR002942">
    <property type="entry name" value="S4_RNA-bd"/>
</dbReference>
<dbReference type="InterPro" id="IPR036986">
    <property type="entry name" value="S4_RNA-bd_sf"/>
</dbReference>
<dbReference type="NCBIfam" id="NF003717">
    <property type="entry name" value="PRK05327.1"/>
    <property type="match status" value="1"/>
</dbReference>
<dbReference type="NCBIfam" id="TIGR01017">
    <property type="entry name" value="rpsD_bact"/>
    <property type="match status" value="1"/>
</dbReference>
<dbReference type="PANTHER" id="PTHR11831">
    <property type="entry name" value="30S 40S RIBOSOMAL PROTEIN"/>
    <property type="match status" value="1"/>
</dbReference>
<dbReference type="PANTHER" id="PTHR11831:SF4">
    <property type="entry name" value="SMALL RIBOSOMAL SUBUNIT PROTEIN US4M"/>
    <property type="match status" value="1"/>
</dbReference>
<dbReference type="Pfam" id="PF00163">
    <property type="entry name" value="Ribosomal_S4"/>
    <property type="match status" value="1"/>
</dbReference>
<dbReference type="Pfam" id="PF01479">
    <property type="entry name" value="S4"/>
    <property type="match status" value="1"/>
</dbReference>
<dbReference type="SMART" id="SM01390">
    <property type="entry name" value="Ribosomal_S4"/>
    <property type="match status" value="1"/>
</dbReference>
<dbReference type="SMART" id="SM00363">
    <property type="entry name" value="S4"/>
    <property type="match status" value="1"/>
</dbReference>
<dbReference type="SUPFAM" id="SSF55174">
    <property type="entry name" value="Alpha-L RNA-binding motif"/>
    <property type="match status" value="1"/>
</dbReference>
<dbReference type="PROSITE" id="PS00632">
    <property type="entry name" value="RIBOSOMAL_S4"/>
    <property type="match status" value="1"/>
</dbReference>
<dbReference type="PROSITE" id="PS50889">
    <property type="entry name" value="S4"/>
    <property type="match status" value="1"/>
</dbReference>
<protein>
    <recommendedName>
        <fullName evidence="1">Small ribosomal subunit protein uS4</fullName>
    </recommendedName>
    <alternativeName>
        <fullName evidence="2">30S ribosomal protein S4</fullName>
    </alternativeName>
</protein>
<sequence>MANNTRARRQARLSRSLGIALTPKAAKYMERRPYGPGEHGRARKKQDSDYAVRLREKQRLRAQYGIREAQMTRAFEEARRTKGLTGENLIELLEMRLDALVLRAGFARTIAQARQLVVHRHILVDGIRVDRPSFRVGEGQLVHVHSRSETMVPLQVAAAGAHRDVLPAVPAYLDVKLEALQARLVRRPKRSEIPVTCEEQLVVEFYAR</sequence>
<organism>
    <name type="scientific">Pseudarthrobacter chlorophenolicus (strain ATCC 700700 / DSM 12829 / CIP 107037 / JCM 12360 / KCTC 9906 / NCIMB 13794 / A6)</name>
    <name type="common">Arthrobacter chlorophenolicus</name>
    <dbReference type="NCBI Taxonomy" id="452863"/>
    <lineage>
        <taxon>Bacteria</taxon>
        <taxon>Bacillati</taxon>
        <taxon>Actinomycetota</taxon>
        <taxon>Actinomycetes</taxon>
        <taxon>Micrococcales</taxon>
        <taxon>Micrococcaceae</taxon>
        <taxon>Pseudarthrobacter</taxon>
    </lineage>
</organism>
<comment type="function">
    <text evidence="1">One of the primary rRNA binding proteins, it binds directly to 16S rRNA where it nucleates assembly of the body of the 30S subunit.</text>
</comment>
<comment type="function">
    <text evidence="1">With S5 and S12 plays an important role in translational accuracy.</text>
</comment>
<comment type="subunit">
    <text evidence="1">Part of the 30S ribosomal subunit. Contacts protein S5. The interaction surface between S4 and S5 is involved in control of translational fidelity.</text>
</comment>
<comment type="similarity">
    <text evidence="1">Belongs to the universal ribosomal protein uS4 family.</text>
</comment>
<name>RS4_PSECP</name>
<evidence type="ECO:0000255" key="1">
    <source>
        <dbReference type="HAMAP-Rule" id="MF_01306"/>
    </source>
</evidence>
<evidence type="ECO:0000305" key="2"/>
<keyword id="KW-0687">Ribonucleoprotein</keyword>
<keyword id="KW-0689">Ribosomal protein</keyword>
<keyword id="KW-0694">RNA-binding</keyword>
<keyword id="KW-0699">rRNA-binding</keyword>